<protein>
    <recommendedName>
        <fullName evidence="1">Large ribosomal subunit protein uL29</fullName>
    </recommendedName>
    <alternativeName>
        <fullName evidence="2">50S ribosomal protein L29</fullName>
    </alternativeName>
</protein>
<evidence type="ECO:0000255" key="1">
    <source>
        <dbReference type="HAMAP-Rule" id="MF_00374"/>
    </source>
</evidence>
<evidence type="ECO:0000305" key="2"/>
<dbReference type="EMBL" id="AE016879">
    <property type="protein sequence ID" value="AAP24172.1"/>
    <property type="molecule type" value="Genomic_DNA"/>
</dbReference>
<dbReference type="EMBL" id="AE017334">
    <property type="protein sequence ID" value="AAT29198.1"/>
    <property type="molecule type" value="Genomic_DNA"/>
</dbReference>
<dbReference type="EMBL" id="AE017225">
    <property type="protein sequence ID" value="AAT52455.1"/>
    <property type="molecule type" value="Genomic_DNA"/>
</dbReference>
<dbReference type="RefSeq" id="NP_842686.1">
    <property type="nucleotide sequence ID" value="NC_003997.3"/>
</dbReference>
<dbReference type="RefSeq" id="WP_000855718.1">
    <property type="nucleotide sequence ID" value="NZ_WXXJ01000051.1"/>
</dbReference>
<dbReference type="RefSeq" id="YP_026404.1">
    <property type="nucleotide sequence ID" value="NC_005945.1"/>
</dbReference>
<dbReference type="SMR" id="Q81VS2"/>
<dbReference type="STRING" id="261594.GBAA_0118"/>
<dbReference type="DNASU" id="1084717"/>
<dbReference type="GeneID" id="93010935"/>
<dbReference type="KEGG" id="ban:BA_0118"/>
<dbReference type="KEGG" id="bar:GBAA_0118"/>
<dbReference type="KEGG" id="bat:BAS0118"/>
<dbReference type="PATRIC" id="fig|198094.11.peg.115"/>
<dbReference type="eggNOG" id="COG0255">
    <property type="taxonomic scope" value="Bacteria"/>
</dbReference>
<dbReference type="HOGENOM" id="CLU_158491_5_2_9"/>
<dbReference type="OMA" id="RFQMATS"/>
<dbReference type="OrthoDB" id="9815192at2"/>
<dbReference type="Proteomes" id="UP000000427">
    <property type="component" value="Chromosome"/>
</dbReference>
<dbReference type="Proteomes" id="UP000000594">
    <property type="component" value="Chromosome"/>
</dbReference>
<dbReference type="GO" id="GO:0022625">
    <property type="term" value="C:cytosolic large ribosomal subunit"/>
    <property type="evidence" value="ECO:0007669"/>
    <property type="project" value="TreeGrafter"/>
</dbReference>
<dbReference type="GO" id="GO:0003735">
    <property type="term" value="F:structural constituent of ribosome"/>
    <property type="evidence" value="ECO:0007669"/>
    <property type="project" value="InterPro"/>
</dbReference>
<dbReference type="GO" id="GO:0006412">
    <property type="term" value="P:translation"/>
    <property type="evidence" value="ECO:0007669"/>
    <property type="project" value="UniProtKB-UniRule"/>
</dbReference>
<dbReference type="CDD" id="cd00427">
    <property type="entry name" value="Ribosomal_L29_HIP"/>
    <property type="match status" value="1"/>
</dbReference>
<dbReference type="FunFam" id="1.10.287.310:FF:000001">
    <property type="entry name" value="50S ribosomal protein L29"/>
    <property type="match status" value="1"/>
</dbReference>
<dbReference type="Gene3D" id="1.10.287.310">
    <property type="match status" value="1"/>
</dbReference>
<dbReference type="HAMAP" id="MF_00374">
    <property type="entry name" value="Ribosomal_uL29"/>
    <property type="match status" value="1"/>
</dbReference>
<dbReference type="InterPro" id="IPR050063">
    <property type="entry name" value="Ribosomal_protein_uL29"/>
</dbReference>
<dbReference type="InterPro" id="IPR001854">
    <property type="entry name" value="Ribosomal_uL29"/>
</dbReference>
<dbReference type="InterPro" id="IPR018254">
    <property type="entry name" value="Ribosomal_uL29_CS"/>
</dbReference>
<dbReference type="InterPro" id="IPR036049">
    <property type="entry name" value="Ribosomal_uL29_sf"/>
</dbReference>
<dbReference type="NCBIfam" id="TIGR00012">
    <property type="entry name" value="L29"/>
    <property type="match status" value="1"/>
</dbReference>
<dbReference type="PANTHER" id="PTHR10916">
    <property type="entry name" value="60S RIBOSOMAL PROTEIN L35/50S RIBOSOMAL PROTEIN L29"/>
    <property type="match status" value="1"/>
</dbReference>
<dbReference type="PANTHER" id="PTHR10916:SF0">
    <property type="entry name" value="LARGE RIBOSOMAL SUBUNIT PROTEIN UL29C"/>
    <property type="match status" value="1"/>
</dbReference>
<dbReference type="Pfam" id="PF00831">
    <property type="entry name" value="Ribosomal_L29"/>
    <property type="match status" value="1"/>
</dbReference>
<dbReference type="SUPFAM" id="SSF46561">
    <property type="entry name" value="Ribosomal protein L29 (L29p)"/>
    <property type="match status" value="1"/>
</dbReference>
<dbReference type="PROSITE" id="PS00579">
    <property type="entry name" value="RIBOSOMAL_L29"/>
    <property type="match status" value="1"/>
</dbReference>
<name>RL29_BACAN</name>
<sequence length="66" mass="7768">MKTNDIRELTTAEIETKVKALKEELFNLRFQLATGQLENPTRIREVRKAIARMKTVVREREIGINR</sequence>
<feature type="chain" id="PRO_0000130347" description="Large ribosomal subunit protein uL29">
    <location>
        <begin position="1"/>
        <end position="66"/>
    </location>
</feature>
<proteinExistence type="inferred from homology"/>
<gene>
    <name evidence="1" type="primary">rpmC</name>
    <name type="ordered locus">BA_0118</name>
    <name type="ordered locus">GBAA_0118</name>
    <name type="ordered locus">BAS0118</name>
</gene>
<accession>Q81VS2</accession>
<accession>Q6I4S6</accession>
<accession>Q6KYH2</accession>
<reference key="1">
    <citation type="journal article" date="2003" name="Nature">
        <title>The genome sequence of Bacillus anthracis Ames and comparison to closely related bacteria.</title>
        <authorList>
            <person name="Read T.D."/>
            <person name="Peterson S.N."/>
            <person name="Tourasse N.J."/>
            <person name="Baillie L.W."/>
            <person name="Paulsen I.T."/>
            <person name="Nelson K.E."/>
            <person name="Tettelin H."/>
            <person name="Fouts D.E."/>
            <person name="Eisen J.A."/>
            <person name="Gill S.R."/>
            <person name="Holtzapple E.K."/>
            <person name="Okstad O.A."/>
            <person name="Helgason E."/>
            <person name="Rilstone J."/>
            <person name="Wu M."/>
            <person name="Kolonay J.F."/>
            <person name="Beanan M.J."/>
            <person name="Dodson R.J."/>
            <person name="Brinkac L.M."/>
            <person name="Gwinn M.L."/>
            <person name="DeBoy R.T."/>
            <person name="Madpu R."/>
            <person name="Daugherty S.C."/>
            <person name="Durkin A.S."/>
            <person name="Haft D.H."/>
            <person name="Nelson W.C."/>
            <person name="Peterson J.D."/>
            <person name="Pop M."/>
            <person name="Khouri H.M."/>
            <person name="Radune D."/>
            <person name="Benton J.L."/>
            <person name="Mahamoud Y."/>
            <person name="Jiang L."/>
            <person name="Hance I.R."/>
            <person name="Weidman J.F."/>
            <person name="Berry K.J."/>
            <person name="Plaut R.D."/>
            <person name="Wolf A.M."/>
            <person name="Watkins K.L."/>
            <person name="Nierman W.C."/>
            <person name="Hazen A."/>
            <person name="Cline R.T."/>
            <person name="Redmond C."/>
            <person name="Thwaite J.E."/>
            <person name="White O."/>
            <person name="Salzberg S.L."/>
            <person name="Thomason B."/>
            <person name="Friedlander A.M."/>
            <person name="Koehler T.M."/>
            <person name="Hanna P.C."/>
            <person name="Kolstoe A.-B."/>
            <person name="Fraser C.M."/>
        </authorList>
    </citation>
    <scope>NUCLEOTIDE SEQUENCE [LARGE SCALE GENOMIC DNA]</scope>
    <source>
        <strain>Ames / isolate Porton</strain>
    </source>
</reference>
<reference key="2">
    <citation type="journal article" date="2009" name="J. Bacteriol.">
        <title>The complete genome sequence of Bacillus anthracis Ames 'Ancestor'.</title>
        <authorList>
            <person name="Ravel J."/>
            <person name="Jiang L."/>
            <person name="Stanley S.T."/>
            <person name="Wilson M.R."/>
            <person name="Decker R.S."/>
            <person name="Read T.D."/>
            <person name="Worsham P."/>
            <person name="Keim P.S."/>
            <person name="Salzberg S.L."/>
            <person name="Fraser-Liggett C.M."/>
            <person name="Rasko D.A."/>
        </authorList>
    </citation>
    <scope>NUCLEOTIDE SEQUENCE [LARGE SCALE GENOMIC DNA]</scope>
    <source>
        <strain>Ames ancestor</strain>
    </source>
</reference>
<reference key="3">
    <citation type="submission" date="2004-01" db="EMBL/GenBank/DDBJ databases">
        <title>Complete genome sequence of Bacillus anthracis Sterne.</title>
        <authorList>
            <person name="Brettin T.S."/>
            <person name="Bruce D."/>
            <person name="Challacombe J.F."/>
            <person name="Gilna P."/>
            <person name="Han C."/>
            <person name="Hill K."/>
            <person name="Hitchcock P."/>
            <person name="Jackson P."/>
            <person name="Keim P."/>
            <person name="Longmire J."/>
            <person name="Lucas S."/>
            <person name="Okinaka R."/>
            <person name="Richardson P."/>
            <person name="Rubin E."/>
            <person name="Tice H."/>
        </authorList>
    </citation>
    <scope>NUCLEOTIDE SEQUENCE [LARGE SCALE GENOMIC DNA]</scope>
    <source>
        <strain>Sterne</strain>
    </source>
</reference>
<keyword id="KW-1185">Reference proteome</keyword>
<keyword id="KW-0687">Ribonucleoprotein</keyword>
<keyword id="KW-0689">Ribosomal protein</keyword>
<comment type="similarity">
    <text evidence="1">Belongs to the universal ribosomal protein uL29 family.</text>
</comment>
<organism>
    <name type="scientific">Bacillus anthracis</name>
    <dbReference type="NCBI Taxonomy" id="1392"/>
    <lineage>
        <taxon>Bacteria</taxon>
        <taxon>Bacillati</taxon>
        <taxon>Bacillota</taxon>
        <taxon>Bacilli</taxon>
        <taxon>Bacillales</taxon>
        <taxon>Bacillaceae</taxon>
        <taxon>Bacillus</taxon>
        <taxon>Bacillus cereus group</taxon>
    </lineage>
</organism>